<comment type="function">
    <text evidence="1">Binds 16S rRNA, required for the assembly of 30S particles.</text>
</comment>
<comment type="subunit">
    <text evidence="1">Part of the 30S ribosomal subunit.</text>
</comment>
<comment type="subcellular location">
    <subcellularLocation>
        <location>Plastid</location>
        <location>Chloroplast</location>
    </subcellularLocation>
</comment>
<comment type="similarity">
    <text evidence="1">Belongs to the universal ribosomal protein uS14 family.</text>
</comment>
<name>RR14_HELAN</name>
<sequence>MAKKSLIQREKKRQKLEQKYHLIRRSSKEEISKVRSLSDKWEIYGKLQSPPRNSAPTRLHRRCFSTGRPRANYRDFGLSGHILREMVHACLLPGATRSSW</sequence>
<dbReference type="EMBL" id="DQ383815">
    <property type="protein sequence ID" value="ABD47144.1"/>
    <property type="molecule type" value="Genomic_DNA"/>
</dbReference>
<dbReference type="RefSeq" id="YP_588115.1">
    <property type="nucleotide sequence ID" value="NC_007977.1"/>
</dbReference>
<dbReference type="SMR" id="Q1KXW1"/>
<dbReference type="EnsemblPlants" id="mRNA:HanXRQr2_Chr02g0061701">
    <property type="protein sequence ID" value="CDS:HanXRQr2_Chr02g0061701.1"/>
    <property type="gene ID" value="HanXRQr2_Chr02g0061701"/>
</dbReference>
<dbReference type="EnsemblPlants" id="mRNA:HanXRQr2_Chr05g0224091">
    <property type="protein sequence ID" value="CDS:HanXRQr2_Chr05g0224091.1"/>
    <property type="gene ID" value="HanXRQr2_Chr05g0224091"/>
</dbReference>
<dbReference type="GeneID" id="4055590"/>
<dbReference type="Gramene" id="mRNA:HanXRQr2_Chr02g0061701">
    <property type="protein sequence ID" value="CDS:HanXRQr2_Chr02g0061701.1"/>
    <property type="gene ID" value="HanXRQr2_Chr02g0061701"/>
</dbReference>
<dbReference type="Gramene" id="mRNA:HanXRQr2_Chr05g0224091">
    <property type="protein sequence ID" value="CDS:HanXRQr2_Chr05g0224091.1"/>
    <property type="gene ID" value="HanXRQr2_Chr05g0224091"/>
</dbReference>
<dbReference type="KEGG" id="han:4055590"/>
<dbReference type="OMA" id="RPRANYL"/>
<dbReference type="OrthoDB" id="413436at2759"/>
<dbReference type="PhylomeDB" id="Q1KXW1"/>
<dbReference type="GO" id="GO:0009507">
    <property type="term" value="C:chloroplast"/>
    <property type="evidence" value="ECO:0007669"/>
    <property type="project" value="UniProtKB-SubCell"/>
</dbReference>
<dbReference type="GO" id="GO:1990904">
    <property type="term" value="C:ribonucleoprotein complex"/>
    <property type="evidence" value="ECO:0007669"/>
    <property type="project" value="UniProtKB-KW"/>
</dbReference>
<dbReference type="GO" id="GO:0005840">
    <property type="term" value="C:ribosome"/>
    <property type="evidence" value="ECO:0007669"/>
    <property type="project" value="UniProtKB-KW"/>
</dbReference>
<dbReference type="GO" id="GO:0019843">
    <property type="term" value="F:rRNA binding"/>
    <property type="evidence" value="ECO:0007669"/>
    <property type="project" value="UniProtKB-UniRule"/>
</dbReference>
<dbReference type="GO" id="GO:0003735">
    <property type="term" value="F:structural constituent of ribosome"/>
    <property type="evidence" value="ECO:0007669"/>
    <property type="project" value="InterPro"/>
</dbReference>
<dbReference type="GO" id="GO:0006412">
    <property type="term" value="P:translation"/>
    <property type="evidence" value="ECO:0007669"/>
    <property type="project" value="UniProtKB-UniRule"/>
</dbReference>
<dbReference type="FunFam" id="1.10.287.1480:FF:000001">
    <property type="entry name" value="30S ribosomal protein S14"/>
    <property type="match status" value="1"/>
</dbReference>
<dbReference type="Gene3D" id="1.10.287.1480">
    <property type="match status" value="1"/>
</dbReference>
<dbReference type="HAMAP" id="MF_00537">
    <property type="entry name" value="Ribosomal_uS14_1"/>
    <property type="match status" value="1"/>
</dbReference>
<dbReference type="InterPro" id="IPR001209">
    <property type="entry name" value="Ribosomal_uS14"/>
</dbReference>
<dbReference type="InterPro" id="IPR023036">
    <property type="entry name" value="Ribosomal_uS14_bac/plastid"/>
</dbReference>
<dbReference type="InterPro" id="IPR018271">
    <property type="entry name" value="Ribosomal_uS14_CS"/>
</dbReference>
<dbReference type="NCBIfam" id="NF006477">
    <property type="entry name" value="PRK08881.1"/>
    <property type="match status" value="1"/>
</dbReference>
<dbReference type="PANTHER" id="PTHR19836">
    <property type="entry name" value="30S RIBOSOMAL PROTEIN S14"/>
    <property type="match status" value="1"/>
</dbReference>
<dbReference type="PANTHER" id="PTHR19836:SF19">
    <property type="entry name" value="SMALL RIBOSOMAL SUBUNIT PROTEIN US14M"/>
    <property type="match status" value="1"/>
</dbReference>
<dbReference type="Pfam" id="PF00253">
    <property type="entry name" value="Ribosomal_S14"/>
    <property type="match status" value="1"/>
</dbReference>
<dbReference type="SUPFAM" id="SSF57716">
    <property type="entry name" value="Glucocorticoid receptor-like (DNA-binding domain)"/>
    <property type="match status" value="1"/>
</dbReference>
<dbReference type="PROSITE" id="PS00527">
    <property type="entry name" value="RIBOSOMAL_S14"/>
    <property type="match status" value="1"/>
</dbReference>
<keyword id="KW-0150">Chloroplast</keyword>
<keyword id="KW-0934">Plastid</keyword>
<keyword id="KW-0687">Ribonucleoprotein</keyword>
<keyword id="KW-0689">Ribosomal protein</keyword>
<keyword id="KW-0694">RNA-binding</keyword>
<keyword id="KW-0699">rRNA-binding</keyword>
<geneLocation type="chloroplast"/>
<reference key="1">
    <citation type="submission" date="2006-01" db="EMBL/GenBank/DDBJ databases">
        <title>A comparison of the first two published chloroplast genomes in Asteraceae: Lactuca and Helianthus.</title>
        <authorList>
            <person name="Timme R.E."/>
            <person name="Kuehl J.V."/>
            <person name="Boore J.L."/>
            <person name="Jansen R.K."/>
        </authorList>
    </citation>
    <scope>NUCLEOTIDE SEQUENCE [LARGE SCALE GENOMIC DNA]</scope>
    <source>
        <strain>cv. HA383</strain>
    </source>
</reference>
<gene>
    <name evidence="1" type="primary">rps14</name>
</gene>
<accession>Q1KXW1</accession>
<protein>
    <recommendedName>
        <fullName evidence="1">Small ribosomal subunit protein uS14c</fullName>
    </recommendedName>
    <alternativeName>
        <fullName evidence="2">30S ribosomal protein S14, chloroplastic</fullName>
    </alternativeName>
</protein>
<feature type="chain" id="PRO_0000276680" description="Small ribosomal subunit protein uS14c">
    <location>
        <begin position="1"/>
        <end position="100"/>
    </location>
</feature>
<evidence type="ECO:0000255" key="1">
    <source>
        <dbReference type="HAMAP-Rule" id="MF_00537"/>
    </source>
</evidence>
<evidence type="ECO:0000305" key="2"/>
<proteinExistence type="inferred from homology"/>
<organism>
    <name type="scientific">Helianthus annuus</name>
    <name type="common">Common sunflower</name>
    <dbReference type="NCBI Taxonomy" id="4232"/>
    <lineage>
        <taxon>Eukaryota</taxon>
        <taxon>Viridiplantae</taxon>
        <taxon>Streptophyta</taxon>
        <taxon>Embryophyta</taxon>
        <taxon>Tracheophyta</taxon>
        <taxon>Spermatophyta</taxon>
        <taxon>Magnoliopsida</taxon>
        <taxon>eudicotyledons</taxon>
        <taxon>Gunneridae</taxon>
        <taxon>Pentapetalae</taxon>
        <taxon>asterids</taxon>
        <taxon>campanulids</taxon>
        <taxon>Asterales</taxon>
        <taxon>Asteraceae</taxon>
        <taxon>Asteroideae</taxon>
        <taxon>Heliantheae alliance</taxon>
        <taxon>Heliantheae</taxon>
        <taxon>Helianthus</taxon>
    </lineage>
</organism>